<reference key="1">
    <citation type="journal article" date="2000" name="Cancer Res.">
        <title>A new tumor-rejection antigen recognized by cytotoxic T lymphocytes infiltrating into a lung adenocarcinoma.</title>
        <authorList>
            <person name="Nishizaka S."/>
            <person name="Gomi S."/>
            <person name="Harada K."/>
            <person name="Oizumi K."/>
            <person name="Itoh K."/>
            <person name="Shichijo S."/>
        </authorList>
    </citation>
    <scope>NUCLEOTIDE SEQUENCE [MRNA] (ISOFORMS 1 AND 2)</scope>
</reference>
<reference key="2">
    <citation type="journal article" date="1998" name="DNA Res.">
        <title>Prediction of the coding sequences of unidentified human genes. XI. The complete sequences of 100 new cDNA clones from brain which code for large proteins in vitro.</title>
        <authorList>
            <person name="Nagase T."/>
            <person name="Ishikawa K."/>
            <person name="Suyama M."/>
            <person name="Kikuno R."/>
            <person name="Miyajima N."/>
            <person name="Tanaka A."/>
            <person name="Kotani H."/>
            <person name="Nomura N."/>
            <person name="Ohara O."/>
        </authorList>
    </citation>
    <scope>NUCLEOTIDE SEQUENCE [LARGE SCALE MRNA] (ISOFORM 1)</scope>
    <source>
        <tissue>Brain</tissue>
    </source>
</reference>
<reference key="3">
    <citation type="journal article" date="2004" name="Nat. Genet.">
        <title>Complete sequencing and characterization of 21,243 full-length human cDNAs.</title>
        <authorList>
            <person name="Ota T."/>
            <person name="Suzuki Y."/>
            <person name="Nishikawa T."/>
            <person name="Otsuki T."/>
            <person name="Sugiyama T."/>
            <person name="Irie R."/>
            <person name="Wakamatsu A."/>
            <person name="Hayashi K."/>
            <person name="Sato H."/>
            <person name="Nagai K."/>
            <person name="Kimura K."/>
            <person name="Makita H."/>
            <person name="Sekine M."/>
            <person name="Obayashi M."/>
            <person name="Nishi T."/>
            <person name="Shibahara T."/>
            <person name="Tanaka T."/>
            <person name="Ishii S."/>
            <person name="Yamamoto J."/>
            <person name="Saito K."/>
            <person name="Kawai Y."/>
            <person name="Isono Y."/>
            <person name="Nakamura Y."/>
            <person name="Nagahari K."/>
            <person name="Murakami K."/>
            <person name="Yasuda T."/>
            <person name="Iwayanagi T."/>
            <person name="Wagatsuma M."/>
            <person name="Shiratori A."/>
            <person name="Sudo H."/>
            <person name="Hosoiri T."/>
            <person name="Kaku Y."/>
            <person name="Kodaira H."/>
            <person name="Kondo H."/>
            <person name="Sugawara M."/>
            <person name="Takahashi M."/>
            <person name="Kanda K."/>
            <person name="Yokoi T."/>
            <person name="Furuya T."/>
            <person name="Kikkawa E."/>
            <person name="Omura Y."/>
            <person name="Abe K."/>
            <person name="Kamihara K."/>
            <person name="Katsuta N."/>
            <person name="Sato K."/>
            <person name="Tanikawa M."/>
            <person name="Yamazaki M."/>
            <person name="Ninomiya K."/>
            <person name="Ishibashi T."/>
            <person name="Yamashita H."/>
            <person name="Murakawa K."/>
            <person name="Fujimori K."/>
            <person name="Tanai H."/>
            <person name="Kimata M."/>
            <person name="Watanabe M."/>
            <person name="Hiraoka S."/>
            <person name="Chiba Y."/>
            <person name="Ishida S."/>
            <person name="Ono Y."/>
            <person name="Takiguchi S."/>
            <person name="Watanabe S."/>
            <person name="Yosida M."/>
            <person name="Hotuta T."/>
            <person name="Kusano J."/>
            <person name="Kanehori K."/>
            <person name="Takahashi-Fujii A."/>
            <person name="Hara H."/>
            <person name="Tanase T.-O."/>
            <person name="Nomura Y."/>
            <person name="Togiya S."/>
            <person name="Komai F."/>
            <person name="Hara R."/>
            <person name="Takeuchi K."/>
            <person name="Arita M."/>
            <person name="Imose N."/>
            <person name="Musashino K."/>
            <person name="Yuuki H."/>
            <person name="Oshima A."/>
            <person name="Sasaki N."/>
            <person name="Aotsuka S."/>
            <person name="Yoshikawa Y."/>
            <person name="Matsunawa H."/>
            <person name="Ichihara T."/>
            <person name="Shiohata N."/>
            <person name="Sano S."/>
            <person name="Moriya S."/>
            <person name="Momiyama H."/>
            <person name="Satoh N."/>
            <person name="Takami S."/>
            <person name="Terashima Y."/>
            <person name="Suzuki O."/>
            <person name="Nakagawa S."/>
            <person name="Senoh A."/>
            <person name="Mizoguchi H."/>
            <person name="Goto Y."/>
            <person name="Shimizu F."/>
            <person name="Wakebe H."/>
            <person name="Hishigaki H."/>
            <person name="Watanabe T."/>
            <person name="Sugiyama A."/>
            <person name="Takemoto M."/>
            <person name="Kawakami B."/>
            <person name="Yamazaki M."/>
            <person name="Watanabe K."/>
            <person name="Kumagai A."/>
            <person name="Itakura S."/>
            <person name="Fukuzumi Y."/>
            <person name="Fujimori Y."/>
            <person name="Komiyama M."/>
            <person name="Tashiro H."/>
            <person name="Tanigami A."/>
            <person name="Fujiwara T."/>
            <person name="Ono T."/>
            <person name="Yamada K."/>
            <person name="Fujii Y."/>
            <person name="Ozaki K."/>
            <person name="Hirao M."/>
            <person name="Ohmori Y."/>
            <person name="Kawabata A."/>
            <person name="Hikiji T."/>
            <person name="Kobatake N."/>
            <person name="Inagaki H."/>
            <person name="Ikema Y."/>
            <person name="Okamoto S."/>
            <person name="Okitani R."/>
            <person name="Kawakami T."/>
            <person name="Noguchi S."/>
            <person name="Itoh T."/>
            <person name="Shigeta K."/>
            <person name="Senba T."/>
            <person name="Matsumura K."/>
            <person name="Nakajima Y."/>
            <person name="Mizuno T."/>
            <person name="Morinaga M."/>
            <person name="Sasaki M."/>
            <person name="Togashi T."/>
            <person name="Oyama M."/>
            <person name="Hata H."/>
            <person name="Watanabe M."/>
            <person name="Komatsu T."/>
            <person name="Mizushima-Sugano J."/>
            <person name="Satoh T."/>
            <person name="Shirai Y."/>
            <person name="Takahashi Y."/>
            <person name="Nakagawa K."/>
            <person name="Okumura K."/>
            <person name="Nagase T."/>
            <person name="Nomura N."/>
            <person name="Kikuchi H."/>
            <person name="Masuho Y."/>
            <person name="Yamashita R."/>
            <person name="Nakai K."/>
            <person name="Yada T."/>
            <person name="Nakamura Y."/>
            <person name="Ohara O."/>
            <person name="Isogai T."/>
            <person name="Sugano S."/>
        </authorList>
    </citation>
    <scope>NUCLEOTIDE SEQUENCE [LARGE SCALE MRNA] (ISOFORM 3)</scope>
</reference>
<reference key="4">
    <citation type="submission" date="2004-06" db="EMBL/GenBank/DDBJ databases">
        <title>Cloning of human full open reading frames in Gateway(TM) system entry vector (pDONR201).</title>
        <authorList>
            <person name="Ebert L."/>
            <person name="Schick M."/>
            <person name="Neubert P."/>
            <person name="Schatten R."/>
            <person name="Henze S."/>
            <person name="Korn B."/>
        </authorList>
    </citation>
    <scope>NUCLEOTIDE SEQUENCE [LARGE SCALE MRNA] (ISOFORM 1)</scope>
</reference>
<reference key="5">
    <citation type="journal article" date="2005" name="Nature">
        <title>Generation and annotation of the DNA sequences of human chromosomes 2 and 4.</title>
        <authorList>
            <person name="Hillier L.W."/>
            <person name="Graves T.A."/>
            <person name="Fulton R.S."/>
            <person name="Fulton L.A."/>
            <person name="Pepin K.H."/>
            <person name="Minx P."/>
            <person name="Wagner-McPherson C."/>
            <person name="Layman D."/>
            <person name="Wylie K."/>
            <person name="Sekhon M."/>
            <person name="Becker M.C."/>
            <person name="Fewell G.A."/>
            <person name="Delehaunty K.D."/>
            <person name="Miner T.L."/>
            <person name="Nash W.E."/>
            <person name="Kremitzki C."/>
            <person name="Oddy L."/>
            <person name="Du H."/>
            <person name="Sun H."/>
            <person name="Bradshaw-Cordum H."/>
            <person name="Ali J."/>
            <person name="Carter J."/>
            <person name="Cordes M."/>
            <person name="Harris A."/>
            <person name="Isak A."/>
            <person name="van Brunt A."/>
            <person name="Nguyen C."/>
            <person name="Du F."/>
            <person name="Courtney L."/>
            <person name="Kalicki J."/>
            <person name="Ozersky P."/>
            <person name="Abbott S."/>
            <person name="Armstrong J."/>
            <person name="Belter E.A."/>
            <person name="Caruso L."/>
            <person name="Cedroni M."/>
            <person name="Cotton M."/>
            <person name="Davidson T."/>
            <person name="Desai A."/>
            <person name="Elliott G."/>
            <person name="Erb T."/>
            <person name="Fronick C."/>
            <person name="Gaige T."/>
            <person name="Haakenson W."/>
            <person name="Haglund K."/>
            <person name="Holmes A."/>
            <person name="Harkins R."/>
            <person name="Kim K."/>
            <person name="Kruchowski S.S."/>
            <person name="Strong C.M."/>
            <person name="Grewal N."/>
            <person name="Goyea E."/>
            <person name="Hou S."/>
            <person name="Levy A."/>
            <person name="Martinka S."/>
            <person name="Mead K."/>
            <person name="McLellan M.D."/>
            <person name="Meyer R."/>
            <person name="Randall-Maher J."/>
            <person name="Tomlinson C."/>
            <person name="Dauphin-Kohlberg S."/>
            <person name="Kozlowicz-Reilly A."/>
            <person name="Shah N."/>
            <person name="Swearengen-Shahid S."/>
            <person name="Snider J."/>
            <person name="Strong J.T."/>
            <person name="Thompson J."/>
            <person name="Yoakum M."/>
            <person name="Leonard S."/>
            <person name="Pearman C."/>
            <person name="Trani L."/>
            <person name="Radionenko M."/>
            <person name="Waligorski J.E."/>
            <person name="Wang C."/>
            <person name="Rock S.M."/>
            <person name="Tin-Wollam A.-M."/>
            <person name="Maupin R."/>
            <person name="Latreille P."/>
            <person name="Wendl M.C."/>
            <person name="Yang S.-P."/>
            <person name="Pohl C."/>
            <person name="Wallis J.W."/>
            <person name="Spieth J."/>
            <person name="Bieri T.A."/>
            <person name="Berkowicz N."/>
            <person name="Nelson J.O."/>
            <person name="Osborne J."/>
            <person name="Ding L."/>
            <person name="Meyer R."/>
            <person name="Sabo A."/>
            <person name="Shotland Y."/>
            <person name="Sinha P."/>
            <person name="Wohldmann P.E."/>
            <person name="Cook L.L."/>
            <person name="Hickenbotham M.T."/>
            <person name="Eldred J."/>
            <person name="Williams D."/>
            <person name="Jones T.A."/>
            <person name="She X."/>
            <person name="Ciccarelli F.D."/>
            <person name="Izaurralde E."/>
            <person name="Taylor J."/>
            <person name="Schmutz J."/>
            <person name="Myers R.M."/>
            <person name="Cox D.R."/>
            <person name="Huang X."/>
            <person name="McPherson J.D."/>
            <person name="Mardis E.R."/>
            <person name="Clifton S.W."/>
            <person name="Warren W.C."/>
            <person name="Chinwalla A.T."/>
            <person name="Eddy S.R."/>
            <person name="Marra M.A."/>
            <person name="Ovcharenko I."/>
            <person name="Furey T.S."/>
            <person name="Miller W."/>
            <person name="Eichler E.E."/>
            <person name="Bork P."/>
            <person name="Suyama M."/>
            <person name="Torrents D."/>
            <person name="Waterston R.H."/>
            <person name="Wilson R.K."/>
        </authorList>
    </citation>
    <scope>NUCLEOTIDE SEQUENCE [LARGE SCALE GENOMIC DNA]</scope>
</reference>
<reference key="6">
    <citation type="journal article" date="2004" name="Genome Res.">
        <title>The status, quality, and expansion of the NIH full-length cDNA project: the Mammalian Gene Collection (MGC).</title>
        <authorList>
            <consortium name="The MGC Project Team"/>
        </authorList>
    </citation>
    <scope>NUCLEOTIDE SEQUENCE [LARGE SCALE MRNA] (ISOFORM 1)</scope>
    <source>
        <tissue>Uterus</tissue>
    </source>
</reference>
<reference key="7">
    <citation type="journal article" date="2001" name="Mol. Cell. Biol.">
        <title>Human STAGA complex is a chromatin-acetylating transcription coactivator that interacts with pre-mRNA splicing and DNA damage-binding factors in vivo.</title>
        <authorList>
            <person name="Martinez E."/>
            <person name="Palhan V.B."/>
            <person name="Tjernberg A."/>
            <person name="Lymar E.S."/>
            <person name="Gamper A.M."/>
            <person name="Kundu T.K."/>
            <person name="Chait B.T."/>
            <person name="Roeder R.G."/>
        </authorList>
    </citation>
    <scope>SUBCELLULAR LOCATION</scope>
    <scope>IDENTIFICATION AS PART OF THE STAGA COMPLEX WITH SUPT3H; GCN5L2; TRRAP; TAF5L; TAF6L; TADA3L; TAF10; TAF12 AND TAF9</scope>
    <scope>IDENTIFICATION BY MASS SPECTROMETRY</scope>
</reference>
<reference key="8">
    <citation type="journal article" date="2005" name="J. Biol. Chem.">
        <title>Systematic identification and analysis of mammalian small ubiquitin-like modifier substrates.</title>
        <authorList>
            <person name="Gocke C.B."/>
            <person name="Yu H."/>
            <person name="Kang J."/>
        </authorList>
    </citation>
    <scope>SUMOYLATION</scope>
</reference>
<reference key="9">
    <citation type="journal article" date="2007" name="PLoS ONE">
        <title>Identification of a small TAF complex and its role in the assembly of TAF-containing complexes.</title>
        <authorList>
            <person name="Demeny M.A."/>
            <person name="Soutoglou E."/>
            <person name="Nagy Z."/>
            <person name="Scheer E."/>
            <person name="Janoshazi A."/>
            <person name="Richardot M."/>
            <person name="Argentini M."/>
            <person name="Kessler P."/>
            <person name="Tora L."/>
        </authorList>
    </citation>
    <scope>IDENTIFICATION IN THE TFTC COMPLEX</scope>
</reference>
<reference key="10">
    <citation type="journal article" date="2008" name="Proc. Natl. Acad. Sci. U.S.A.">
        <title>A quantitative atlas of mitotic phosphorylation.</title>
        <authorList>
            <person name="Dephoure N."/>
            <person name="Zhou C."/>
            <person name="Villen J."/>
            <person name="Beausoleil S.A."/>
            <person name="Bakalarski C.E."/>
            <person name="Elledge S.J."/>
            <person name="Gygi S.P."/>
        </authorList>
    </citation>
    <scope>PHOSPHORYLATION [LARGE SCALE ANALYSIS] AT SER-334</scope>
    <scope>IDENTIFICATION BY MASS SPECTROMETRY [LARGE SCALE ANALYSIS]</scope>
    <source>
        <tissue>Cervix carcinoma</tissue>
    </source>
</reference>
<reference key="11">
    <citation type="journal article" date="2009" name="Sci. Signal.">
        <title>Quantitative phosphoproteomic analysis of T cell receptor signaling reveals system-wide modulation of protein-protein interactions.</title>
        <authorList>
            <person name="Mayya V."/>
            <person name="Lundgren D.H."/>
            <person name="Hwang S.-I."/>
            <person name="Rezaul K."/>
            <person name="Wu L."/>
            <person name="Eng J.K."/>
            <person name="Rodionov V."/>
            <person name="Han D.K."/>
        </authorList>
    </citation>
    <scope>PHOSPHORYLATION [LARGE SCALE ANALYSIS] AT SER-323 AND SER-334</scope>
    <scope>IDENTIFICATION BY MASS SPECTROMETRY [LARGE SCALE ANALYSIS]</scope>
    <source>
        <tissue>Leukemic T-cell</tissue>
    </source>
</reference>
<reference key="12">
    <citation type="journal article" date="2010" name="Sci. Signal.">
        <title>Quantitative phosphoproteomics reveals widespread full phosphorylation site occupancy during mitosis.</title>
        <authorList>
            <person name="Olsen J.V."/>
            <person name="Vermeulen M."/>
            <person name="Santamaria A."/>
            <person name="Kumar C."/>
            <person name="Miller M.L."/>
            <person name="Jensen L.J."/>
            <person name="Gnad F."/>
            <person name="Cox J."/>
            <person name="Jensen T.S."/>
            <person name="Nigg E.A."/>
            <person name="Brunak S."/>
            <person name="Mann M."/>
        </authorList>
    </citation>
    <scope>PHOSPHORYLATION [LARGE SCALE ANALYSIS] AT SER-334</scope>
    <scope>IDENTIFICATION BY MASS SPECTROMETRY [LARGE SCALE ANALYSIS]</scope>
    <source>
        <tissue>Cervix carcinoma</tissue>
    </source>
</reference>
<reference key="13">
    <citation type="journal article" date="2014" name="J. Proteomics">
        <title>An enzyme assisted RP-RPLC approach for in-depth analysis of human liver phosphoproteome.</title>
        <authorList>
            <person name="Bian Y."/>
            <person name="Song C."/>
            <person name="Cheng K."/>
            <person name="Dong M."/>
            <person name="Wang F."/>
            <person name="Huang J."/>
            <person name="Sun D."/>
            <person name="Wang L."/>
            <person name="Ye M."/>
            <person name="Zou H."/>
        </authorList>
    </citation>
    <scope>PHOSPHORYLATION [LARGE SCALE ANALYSIS] AT SER-108 AND SER-334</scope>
    <scope>IDENTIFICATION BY MASS SPECTROMETRY [LARGE SCALE ANALYSIS]</scope>
    <source>
        <tissue>Liver</tissue>
    </source>
</reference>
<reference key="14">
    <citation type="journal article" date="2014" name="Nat. Struct. Mol. Biol.">
        <title>Uncovering global SUMOylation signaling networks in a site-specific manner.</title>
        <authorList>
            <person name="Hendriks I.A."/>
            <person name="D'Souza R.C."/>
            <person name="Yang B."/>
            <person name="Verlaan-de Vries M."/>
            <person name="Mann M."/>
            <person name="Vertegaal A.C."/>
        </authorList>
    </citation>
    <scope>SUMOYLATION [LARGE SCALE ANALYSIS] AT LYS-271</scope>
    <scope>IDENTIFICATION BY MASS SPECTROMETRY [LARGE SCALE ANALYSIS]</scope>
</reference>
<reference key="15">
    <citation type="journal article" date="2015" name="Mol. Cell. Proteomics">
        <title>System-wide analysis of SUMOylation dynamics in response to replication stress reveals novel small ubiquitin-like modified target proteins and acceptor lysines relevant for genome stability.</title>
        <authorList>
            <person name="Xiao Z."/>
            <person name="Chang J.G."/>
            <person name="Hendriks I.A."/>
            <person name="Sigurdsson J.O."/>
            <person name="Olsen J.V."/>
            <person name="Vertegaal A.C."/>
        </authorList>
    </citation>
    <scope>SUMOYLATION [LARGE SCALE ANALYSIS] AT LYS-271</scope>
    <scope>IDENTIFICATION BY MASS SPECTROMETRY [LARGE SCALE ANALYSIS]</scope>
</reference>
<reference key="16">
    <citation type="journal article" date="2017" name="Nat. Struct. Mol. Biol.">
        <title>Site-specific mapping of the human SUMO proteome reveals co-modification with phosphorylation.</title>
        <authorList>
            <person name="Hendriks I.A."/>
            <person name="Lyon D."/>
            <person name="Young C."/>
            <person name="Jensen L.J."/>
            <person name="Vertegaal A.C."/>
            <person name="Nielsen M.L."/>
        </authorList>
    </citation>
    <scope>SUMOYLATION [LARGE SCALE ANALYSIS] AT LYS-271</scope>
    <scope>IDENTIFICATION BY MASS SPECTROMETRY [LARGE SCALE ANALYSIS]</scope>
</reference>
<dbReference type="EMBL" id="AF197954">
    <property type="protein sequence ID" value="AAG28523.1"/>
    <property type="molecule type" value="mRNA"/>
</dbReference>
<dbReference type="EMBL" id="AF224759">
    <property type="protein sequence ID" value="AAG47636.1"/>
    <property type="molecule type" value="mRNA"/>
</dbReference>
<dbReference type="EMBL" id="AB018307">
    <property type="protein sequence ID" value="BAA34484.2"/>
    <property type="status" value="ALT_INIT"/>
    <property type="molecule type" value="mRNA"/>
</dbReference>
<dbReference type="EMBL" id="AK304889">
    <property type="protein sequence ID" value="BAG65625.1"/>
    <property type="molecule type" value="mRNA"/>
</dbReference>
<dbReference type="EMBL" id="CR456983">
    <property type="protein sequence ID" value="CAG33264.1"/>
    <property type="molecule type" value="mRNA"/>
</dbReference>
<dbReference type="EMBL" id="AC074091">
    <property type="protein sequence ID" value="AAX93202.1"/>
    <property type="molecule type" value="Genomic_DNA"/>
</dbReference>
<dbReference type="EMBL" id="BC074000">
    <property type="protein sequence ID" value="AAH74000.1"/>
    <property type="molecule type" value="mRNA"/>
</dbReference>
<dbReference type="CCDS" id="CCDS42667.1">
    <molecule id="O94864-1"/>
</dbReference>
<dbReference type="CCDS" id="CCDS62885.1">
    <molecule id="O94864-2"/>
</dbReference>
<dbReference type="CCDS" id="CCDS62886.1">
    <molecule id="O94864-4"/>
</dbReference>
<dbReference type="RefSeq" id="NP_001269658.1">
    <molecule id="O94864-1"/>
    <property type="nucleotide sequence ID" value="NM_001282729.2"/>
</dbReference>
<dbReference type="RefSeq" id="NP_001269659.1">
    <molecule id="O94864-2"/>
    <property type="nucleotide sequence ID" value="NM_001282730.2"/>
</dbReference>
<dbReference type="RefSeq" id="NP_001269660.1">
    <molecule id="O94864-2"/>
    <property type="nucleotide sequence ID" value="NM_001282731.2"/>
</dbReference>
<dbReference type="RefSeq" id="NP_001269661.1">
    <molecule id="O94864-4"/>
    <property type="nucleotide sequence ID" value="NM_001282732.2"/>
</dbReference>
<dbReference type="RefSeq" id="NP_055675.1">
    <molecule id="O94864-1"/>
    <property type="nucleotide sequence ID" value="NM_014860.3"/>
</dbReference>
<dbReference type="RefSeq" id="XP_005264729.1">
    <molecule id="O94864-2"/>
    <property type="nucleotide sequence ID" value="XM_005264672.5"/>
</dbReference>
<dbReference type="RefSeq" id="XP_054200749.1">
    <molecule id="O94864-2"/>
    <property type="nucleotide sequence ID" value="XM_054344774.1"/>
</dbReference>
<dbReference type="PDB" id="7KTR">
    <property type="method" value="EM"/>
    <property type="resolution" value="2.93 A"/>
    <property type="chains" value="D=51-414"/>
</dbReference>
<dbReference type="PDB" id="7KTS">
    <property type="method" value="EM"/>
    <property type="resolution" value="19.09 A"/>
    <property type="chains" value="D=1-414"/>
</dbReference>
<dbReference type="PDB" id="8H7G">
    <property type="method" value="EM"/>
    <property type="resolution" value="3.70 A"/>
    <property type="chains" value="I=1-414"/>
</dbReference>
<dbReference type="PDBsum" id="7KTR"/>
<dbReference type="PDBsum" id="7KTS"/>
<dbReference type="PDBsum" id="8H7G"/>
<dbReference type="EMDB" id="EMD-23027"/>
<dbReference type="EMDB" id="EMD-23028"/>
<dbReference type="EMDB" id="EMD-34520"/>
<dbReference type="SMR" id="O94864"/>
<dbReference type="BioGRID" id="115242">
    <property type="interactions" value="69"/>
</dbReference>
<dbReference type="ComplexPortal" id="CPX-6802">
    <property type="entry name" value="SAGA complex, KAT2B variant"/>
</dbReference>
<dbReference type="ComplexPortal" id="CPX-900">
    <property type="entry name" value="SAGA complex, KAT2A variant"/>
</dbReference>
<dbReference type="CORUM" id="O94864"/>
<dbReference type="FunCoup" id="O94864">
    <property type="interactions" value="3672"/>
</dbReference>
<dbReference type="IntAct" id="O94864">
    <property type="interactions" value="36"/>
</dbReference>
<dbReference type="MINT" id="O94864"/>
<dbReference type="STRING" id="9606.ENSP00000336750"/>
<dbReference type="GlyGen" id="O94864">
    <property type="glycosylation" value="1 site, 1 O-linked glycan (1 site)"/>
</dbReference>
<dbReference type="iPTMnet" id="O94864"/>
<dbReference type="PhosphoSitePlus" id="O94864"/>
<dbReference type="BioMuta" id="SUPT7L"/>
<dbReference type="jPOST" id="O94864"/>
<dbReference type="MassIVE" id="O94864"/>
<dbReference type="PaxDb" id="9606-ENSP00000336750"/>
<dbReference type="PeptideAtlas" id="O94864"/>
<dbReference type="ProteomicsDB" id="50503">
    <molecule id="O94864-1"/>
</dbReference>
<dbReference type="ProteomicsDB" id="50504">
    <molecule id="O94864-2"/>
</dbReference>
<dbReference type="Pumba" id="O94864"/>
<dbReference type="Antibodypedia" id="50579">
    <property type="antibodies" value="99 antibodies from 19 providers"/>
</dbReference>
<dbReference type="DNASU" id="9913"/>
<dbReference type="Ensembl" id="ENST00000337768.10">
    <molecule id="O94864-1"/>
    <property type="protein sequence ID" value="ENSP00000336750.5"/>
    <property type="gene ID" value="ENSG00000119760.16"/>
</dbReference>
<dbReference type="Ensembl" id="ENST00000404798.6">
    <molecule id="O94864-4"/>
    <property type="protein sequence ID" value="ENSP00000385218.2"/>
    <property type="gene ID" value="ENSG00000119760.16"/>
</dbReference>
<dbReference type="Ensembl" id="ENST00000405491.5">
    <molecule id="O94864-2"/>
    <property type="protein sequence ID" value="ENSP00000384469.1"/>
    <property type="gene ID" value="ENSG00000119760.16"/>
</dbReference>
<dbReference type="Ensembl" id="ENST00000406540.5">
    <molecule id="O94864-2"/>
    <property type="protein sequence ID" value="ENSP00000385436.1"/>
    <property type="gene ID" value="ENSG00000119760.16"/>
</dbReference>
<dbReference type="Ensembl" id="ENST00000464789.2">
    <molecule id="O94864-2"/>
    <property type="protein sequence ID" value="ENSP00000441110.1"/>
    <property type="gene ID" value="ENSG00000119760.16"/>
</dbReference>
<dbReference type="GeneID" id="9913"/>
<dbReference type="KEGG" id="hsa:9913"/>
<dbReference type="MANE-Select" id="ENST00000337768.10">
    <property type="protein sequence ID" value="ENSP00000336750.5"/>
    <property type="RefSeq nucleotide sequence ID" value="NM_014860.3"/>
    <property type="RefSeq protein sequence ID" value="NP_055675.1"/>
</dbReference>
<dbReference type="UCSC" id="uc002rli.3">
    <molecule id="O94864-1"/>
    <property type="organism name" value="human"/>
</dbReference>
<dbReference type="AGR" id="HGNC:30632"/>
<dbReference type="CTD" id="9913"/>
<dbReference type="DisGeNET" id="9913"/>
<dbReference type="GeneCards" id="SUPT7L"/>
<dbReference type="HGNC" id="HGNC:30632">
    <property type="gene designation" value="SUPT7L"/>
</dbReference>
<dbReference type="HPA" id="ENSG00000119760">
    <property type="expression patterns" value="Low tissue specificity"/>
</dbReference>
<dbReference type="MIM" id="612762">
    <property type="type" value="gene"/>
</dbReference>
<dbReference type="neXtProt" id="NX_O94864"/>
<dbReference type="OpenTargets" id="ENSG00000119760"/>
<dbReference type="PharmGKB" id="PA142670854"/>
<dbReference type="VEuPathDB" id="HostDB:ENSG00000119760"/>
<dbReference type="eggNOG" id="ENOG502QQTJ">
    <property type="taxonomic scope" value="Eukaryota"/>
</dbReference>
<dbReference type="GeneTree" id="ENSGT00390000005572"/>
<dbReference type="HOGENOM" id="CLU_055453_1_0_1"/>
<dbReference type="InParanoid" id="O94864"/>
<dbReference type="OMA" id="ELSWNSC"/>
<dbReference type="OrthoDB" id="6021257at2759"/>
<dbReference type="PAN-GO" id="O94864">
    <property type="GO annotations" value="2 GO annotations based on evolutionary models"/>
</dbReference>
<dbReference type="PhylomeDB" id="O94864"/>
<dbReference type="TreeFam" id="TF328615"/>
<dbReference type="PathwayCommons" id="O94864"/>
<dbReference type="Reactome" id="R-HSA-3214847">
    <property type="pathway name" value="HATs acetylate histones"/>
</dbReference>
<dbReference type="SignaLink" id="O94864"/>
<dbReference type="SIGNOR" id="O94864"/>
<dbReference type="BioGRID-ORCS" id="9913">
    <property type="hits" value="77 hits in 1171 CRISPR screens"/>
</dbReference>
<dbReference type="ChiTaRS" id="SUPT7L">
    <property type="organism name" value="human"/>
</dbReference>
<dbReference type="GeneWiki" id="SUPT7L"/>
<dbReference type="GenomeRNAi" id="9913"/>
<dbReference type="Pharos" id="O94864">
    <property type="development level" value="Tbio"/>
</dbReference>
<dbReference type="PRO" id="PR:O94864"/>
<dbReference type="Proteomes" id="UP000005640">
    <property type="component" value="Chromosome 2"/>
</dbReference>
<dbReference type="RNAct" id="O94864">
    <property type="molecule type" value="protein"/>
</dbReference>
<dbReference type="Bgee" id="ENSG00000119760">
    <property type="expression patterns" value="Expressed in middle temporal gyrus and 199 other cell types or tissues"/>
</dbReference>
<dbReference type="GO" id="GO:0005654">
    <property type="term" value="C:nucleoplasm"/>
    <property type="evidence" value="ECO:0000314"/>
    <property type="project" value="HPA"/>
</dbReference>
<dbReference type="GO" id="GO:0005634">
    <property type="term" value="C:nucleus"/>
    <property type="evidence" value="ECO:0000314"/>
    <property type="project" value="HGNC-UCL"/>
</dbReference>
<dbReference type="GO" id="GO:0000124">
    <property type="term" value="C:SAGA complex"/>
    <property type="evidence" value="ECO:0000314"/>
    <property type="project" value="UniProtKB"/>
</dbReference>
<dbReference type="GO" id="GO:0046982">
    <property type="term" value="F:protein heterodimerization activity"/>
    <property type="evidence" value="ECO:0007669"/>
    <property type="project" value="InterPro"/>
</dbReference>
<dbReference type="GO" id="GO:0003713">
    <property type="term" value="F:transcription coactivator activity"/>
    <property type="evidence" value="ECO:0000314"/>
    <property type="project" value="UniProtKB"/>
</dbReference>
<dbReference type="GO" id="GO:0051457">
    <property type="term" value="P:maintenance of protein location in nucleus"/>
    <property type="evidence" value="ECO:0000314"/>
    <property type="project" value="HGNC-UCL"/>
</dbReference>
<dbReference type="GO" id="GO:0045893">
    <property type="term" value="P:positive regulation of DNA-templated transcription"/>
    <property type="evidence" value="ECO:0000303"/>
    <property type="project" value="ComplexPortal"/>
</dbReference>
<dbReference type="GO" id="GO:0006282">
    <property type="term" value="P:regulation of DNA repair"/>
    <property type="evidence" value="ECO:0000303"/>
    <property type="project" value="ComplexPortal"/>
</dbReference>
<dbReference type="GO" id="GO:0043484">
    <property type="term" value="P:regulation of RNA splicing"/>
    <property type="evidence" value="ECO:0000303"/>
    <property type="project" value="ComplexPortal"/>
</dbReference>
<dbReference type="CDD" id="cd06847">
    <property type="entry name" value="HFD_SUPT7L"/>
    <property type="match status" value="1"/>
</dbReference>
<dbReference type="FunFam" id="1.10.20.10:FF:000034">
    <property type="entry name" value="STAGA complex 65 subunit gamma"/>
    <property type="match status" value="1"/>
</dbReference>
<dbReference type="Gene3D" id="1.10.20.10">
    <property type="entry name" value="Histone, subunit A"/>
    <property type="match status" value="1"/>
</dbReference>
<dbReference type="InterPro" id="IPR006565">
    <property type="entry name" value="BTP"/>
</dbReference>
<dbReference type="InterPro" id="IPR009072">
    <property type="entry name" value="Histone-fold"/>
</dbReference>
<dbReference type="InterPro" id="IPR039460">
    <property type="entry name" value="SUPT7L"/>
</dbReference>
<dbReference type="PANTHER" id="PTHR28598">
    <property type="entry name" value="STAGA COMPLEX 65 SUBUNIT GAMMA"/>
    <property type="match status" value="1"/>
</dbReference>
<dbReference type="PANTHER" id="PTHR28598:SF1">
    <property type="entry name" value="STAGA COMPLEX 65 SUBUNIT GAMMA"/>
    <property type="match status" value="1"/>
</dbReference>
<dbReference type="Pfam" id="PF07524">
    <property type="entry name" value="Bromo_TP"/>
    <property type="match status" value="1"/>
</dbReference>
<dbReference type="SMART" id="SM00576">
    <property type="entry name" value="BTP"/>
    <property type="match status" value="1"/>
</dbReference>
<proteinExistence type="evidence at protein level"/>
<gene>
    <name type="primary">SUPT7L</name>
    <name type="synonym">KIAA0764</name>
</gene>
<sequence>MNLQRYWGEIPISSSQTNRSSFDLLPREFRLVEVHDPPLHQPSANKPKPPTMLDIPSEPCSLTIHTIQLIQHNRRLRNLIATAQAQNQQQTEGVKTEESEPLPSCPGSPPLPDDLLPLDCKNPNAPFQIRHSDPESDFYRGKGEPVTELSWHSCRQLLYQAVATILAHAGFDCANESVLETLTDVAHEYCLKFTKLLRFAVDREARLGQTPFPDVMEQVFHEVGIGSVLSLQKFWQHRIKDYHSYMLQISKQLSEEYERIVNPEKATEDAKPVKIKEEPVSDITFPVSEELEADLASGDQSLPMGVLGAQSERFPSNLEVEASPQASSAEVNASPLWNLAHVKMEPQESEEGNVSGHGVLGSDVFEEPMSGMSEAGIPQSPDDSDSSYGSHSTDSLMGSSPVFNQRCKKRMRKI</sequence>
<feature type="chain" id="PRO_0000072233" description="STAGA complex 65 subunit gamma">
    <location>
        <begin position="1"/>
        <end position="414"/>
    </location>
</feature>
<feature type="region of interest" description="Disordered" evidence="1">
    <location>
        <begin position="87"/>
        <end position="108"/>
    </location>
</feature>
<feature type="region of interest" description="Disordered" evidence="1">
    <location>
        <begin position="346"/>
        <end position="414"/>
    </location>
</feature>
<feature type="compositionally biased region" description="Low complexity" evidence="1">
    <location>
        <begin position="386"/>
        <end position="395"/>
    </location>
</feature>
<feature type="modified residue" description="Phosphoserine" evidence="11">
    <location>
        <position position="108"/>
    </location>
</feature>
<feature type="modified residue" description="Phosphoserine" evidence="9">
    <location>
        <position position="323"/>
    </location>
</feature>
<feature type="modified residue" description="Phosphoserine" evidence="8 9 10 11">
    <location>
        <position position="334"/>
    </location>
</feature>
<feature type="cross-link" description="Glycyl lysine isopeptide (Lys-Gly) (interchain with G-Cter in SUMO2)" evidence="12 13 14">
    <location>
        <position position="271"/>
    </location>
</feature>
<feature type="splice variant" id="VSP_003974" description="In isoform 2." evidence="5">
    <original>MNLQ</original>
    <variation>ML</variation>
    <location>
        <begin position="1"/>
        <end position="4"/>
    </location>
</feature>
<feature type="splice variant" id="VSP_054839" description="In isoform 3." evidence="6">
    <original>RYWGEIPISSSQTNRSSFDLLPREFRLVEVHDPPLHQPSANKPKPPTMLDIPSEPCSLTIHTIQLIQHNRRLRNLIATAQAQNQQQTEGVKTEESEPLPSCPGSPPLPDDLLPLDCKNPNAPFQIRHSDPESDFYR</original>
    <variation>S</variation>
    <location>
        <begin position="5"/>
        <end position="140"/>
    </location>
</feature>
<feature type="helix" evidence="15">
    <location>
        <begin position="58"/>
        <end position="86"/>
    </location>
</feature>
<feature type="helix" evidence="15">
    <location>
        <begin position="114"/>
        <end position="117"/>
    </location>
</feature>
<feature type="helix" evidence="15">
    <location>
        <begin position="137"/>
        <end position="140"/>
    </location>
</feature>
<feature type="helix" evidence="15">
    <location>
        <begin position="151"/>
        <end position="169"/>
    </location>
</feature>
<feature type="strand" evidence="15">
    <location>
        <begin position="173"/>
        <end position="175"/>
    </location>
</feature>
<feature type="helix" evidence="15">
    <location>
        <begin position="176"/>
        <end position="207"/>
    </location>
</feature>
<feature type="strand" evidence="15">
    <location>
        <begin position="211"/>
        <end position="214"/>
    </location>
</feature>
<feature type="helix" evidence="15">
    <location>
        <begin position="215"/>
        <end position="222"/>
    </location>
</feature>
<feature type="helix" evidence="15">
    <location>
        <begin position="230"/>
        <end position="238"/>
    </location>
</feature>
<feature type="helix" evidence="15">
    <location>
        <begin position="240"/>
        <end position="261"/>
    </location>
</feature>
<evidence type="ECO:0000256" key="1">
    <source>
        <dbReference type="SAM" id="MobiDB-lite"/>
    </source>
</evidence>
<evidence type="ECO:0000269" key="2">
    <source>
    </source>
</evidence>
<evidence type="ECO:0000269" key="3">
    <source>
    </source>
</evidence>
<evidence type="ECO:0000269" key="4">
    <source>
    </source>
</evidence>
<evidence type="ECO:0000303" key="5">
    <source>
    </source>
</evidence>
<evidence type="ECO:0000303" key="6">
    <source>
    </source>
</evidence>
<evidence type="ECO:0000305" key="7"/>
<evidence type="ECO:0007744" key="8">
    <source>
    </source>
</evidence>
<evidence type="ECO:0007744" key="9">
    <source>
    </source>
</evidence>
<evidence type="ECO:0007744" key="10">
    <source>
    </source>
</evidence>
<evidence type="ECO:0007744" key="11">
    <source>
    </source>
</evidence>
<evidence type="ECO:0007744" key="12">
    <source>
    </source>
</evidence>
<evidence type="ECO:0007744" key="13">
    <source>
    </source>
</evidence>
<evidence type="ECO:0007744" key="14">
    <source>
    </source>
</evidence>
<evidence type="ECO:0007829" key="15">
    <source>
        <dbReference type="PDB" id="7KTR"/>
    </source>
</evidence>
<protein>
    <recommendedName>
        <fullName>STAGA complex 65 subunit gamma</fullName>
    </recommendedName>
    <alternativeName>
        <fullName>Adenocarcinoma antigen ART1</fullName>
    </alternativeName>
    <alternativeName>
        <fullName>SPTF-associated factor 65 gamma</fullName>
        <shortName>STAF65gamma</shortName>
    </alternativeName>
    <alternativeName>
        <fullName>Suppressor of Ty 7-like</fullName>
    </alternativeName>
</protein>
<comment type="subunit">
    <text evidence="4">Component of the STAGA transcription coactivator-HAT complex, at least composed of SUPT3H, SUPT7L, GCN5L2, TAF5L, TAF6L, TADA3L, TAD1L, TAF10, TAF12 and TAF9.</text>
</comment>
<comment type="subcellular location">
    <subcellularLocation>
        <location evidence="2">Nucleus</location>
    </subcellularLocation>
</comment>
<comment type="alternative products">
    <event type="alternative splicing"/>
    <isoform>
        <id>O94864-1</id>
        <name>1</name>
        <sequence type="displayed"/>
    </isoform>
    <isoform>
        <id>O94864-2</id>
        <name>2</name>
        <sequence type="described" ref="VSP_003974"/>
    </isoform>
    <isoform>
        <id>O94864-4</id>
        <name>3</name>
        <sequence type="described" ref="VSP_054839"/>
    </isoform>
</comment>
<comment type="tissue specificity">
    <text>Expressed at high levels in adenocarcinomas and gliomas and low in esophageal cancers and malignant hematological disease. Also expressed at high level in the thymus, low in peripheral blood mononuclear cells, and lowest in the stomach, small intestine, and skeletal muscle.</text>
</comment>
<comment type="PTM">
    <text evidence="3">Sumoylated.</text>
</comment>
<comment type="sequence caution" evidence="7">
    <conflict type="erroneous initiation">
        <sequence resource="EMBL-CDS" id="BAA34484"/>
    </conflict>
</comment>
<keyword id="KW-0002">3D-structure</keyword>
<keyword id="KW-0025">Alternative splicing</keyword>
<keyword id="KW-1017">Isopeptide bond</keyword>
<keyword id="KW-0539">Nucleus</keyword>
<keyword id="KW-0597">Phosphoprotein</keyword>
<keyword id="KW-1267">Proteomics identification</keyword>
<keyword id="KW-1185">Reference proteome</keyword>
<keyword id="KW-0804">Transcription</keyword>
<keyword id="KW-0805">Transcription regulation</keyword>
<keyword id="KW-0832">Ubl conjugation</keyword>
<accession>O94864</accession>
<accession>B4E3W3</accession>
<accession>Q6IB21</accession>
<accession>Q9H2T6</accession>
<name>ST65G_HUMAN</name>
<organism>
    <name type="scientific">Homo sapiens</name>
    <name type="common">Human</name>
    <dbReference type="NCBI Taxonomy" id="9606"/>
    <lineage>
        <taxon>Eukaryota</taxon>
        <taxon>Metazoa</taxon>
        <taxon>Chordata</taxon>
        <taxon>Craniata</taxon>
        <taxon>Vertebrata</taxon>
        <taxon>Euteleostomi</taxon>
        <taxon>Mammalia</taxon>
        <taxon>Eutheria</taxon>
        <taxon>Euarchontoglires</taxon>
        <taxon>Primates</taxon>
        <taxon>Haplorrhini</taxon>
        <taxon>Catarrhini</taxon>
        <taxon>Hominidae</taxon>
        <taxon>Homo</taxon>
    </lineage>
</organism>